<organism>
    <name type="scientific">Caulobacter sp. (strain K31)</name>
    <dbReference type="NCBI Taxonomy" id="366602"/>
    <lineage>
        <taxon>Bacteria</taxon>
        <taxon>Pseudomonadati</taxon>
        <taxon>Pseudomonadota</taxon>
        <taxon>Alphaproteobacteria</taxon>
        <taxon>Caulobacterales</taxon>
        <taxon>Caulobacteraceae</taxon>
        <taxon>Caulobacter</taxon>
    </lineage>
</organism>
<reference key="1">
    <citation type="submission" date="2008-01" db="EMBL/GenBank/DDBJ databases">
        <title>Complete sequence of chromosome of Caulobacter sp. K31.</title>
        <authorList>
            <consortium name="US DOE Joint Genome Institute"/>
            <person name="Copeland A."/>
            <person name="Lucas S."/>
            <person name="Lapidus A."/>
            <person name="Barry K."/>
            <person name="Glavina del Rio T."/>
            <person name="Dalin E."/>
            <person name="Tice H."/>
            <person name="Pitluck S."/>
            <person name="Bruce D."/>
            <person name="Goodwin L."/>
            <person name="Thompson L.S."/>
            <person name="Brettin T."/>
            <person name="Detter J.C."/>
            <person name="Han C."/>
            <person name="Schmutz J."/>
            <person name="Larimer F."/>
            <person name="Land M."/>
            <person name="Hauser L."/>
            <person name="Kyrpides N."/>
            <person name="Kim E."/>
            <person name="Stephens C."/>
            <person name="Richardson P."/>
        </authorList>
    </citation>
    <scope>NUCLEOTIDE SEQUENCE [LARGE SCALE GENOMIC DNA]</scope>
    <source>
        <strain>K31</strain>
    </source>
</reference>
<accession>B0SZT0</accession>
<sequence length="230" mass="23474">MPALFVTGTGTDIGKTHVSCALIRALKVRGAVVDAFKPVVSGFDPKDAAGSDPARLAIALGDPSAVFRIAPRRYRAPLSPNIAAQLEGETLVLDDMVIDAVARAAELRDGLLLVEGAGGVMSPLTDTQTNLDMIVALGAPVLLVAGSYLGTISHVLTALVALRAAKVRVAAVVISESLDAPDLDQTAQALAPFLDGAPLFLAPRGESWDAGALADHLLAAVAPNAFGGTP</sequence>
<dbReference type="EC" id="6.3.3.3" evidence="1"/>
<dbReference type="EMBL" id="CP000927">
    <property type="protein sequence ID" value="ABZ72003.1"/>
    <property type="molecule type" value="Genomic_DNA"/>
</dbReference>
<dbReference type="SMR" id="B0SZT0"/>
<dbReference type="STRING" id="366602.Caul_2876"/>
<dbReference type="KEGG" id="cak:Caul_2876"/>
<dbReference type="eggNOG" id="COG0132">
    <property type="taxonomic scope" value="Bacteria"/>
</dbReference>
<dbReference type="HOGENOM" id="CLU_072551_3_1_5"/>
<dbReference type="OrthoDB" id="9802097at2"/>
<dbReference type="UniPathway" id="UPA00078">
    <property type="reaction ID" value="UER00161"/>
</dbReference>
<dbReference type="GO" id="GO:0005829">
    <property type="term" value="C:cytosol"/>
    <property type="evidence" value="ECO:0007669"/>
    <property type="project" value="TreeGrafter"/>
</dbReference>
<dbReference type="GO" id="GO:0005524">
    <property type="term" value="F:ATP binding"/>
    <property type="evidence" value="ECO:0007669"/>
    <property type="project" value="UniProtKB-UniRule"/>
</dbReference>
<dbReference type="GO" id="GO:0004141">
    <property type="term" value="F:dethiobiotin synthase activity"/>
    <property type="evidence" value="ECO:0007669"/>
    <property type="project" value="UniProtKB-UniRule"/>
</dbReference>
<dbReference type="GO" id="GO:0000287">
    <property type="term" value="F:magnesium ion binding"/>
    <property type="evidence" value="ECO:0007669"/>
    <property type="project" value="UniProtKB-UniRule"/>
</dbReference>
<dbReference type="GO" id="GO:0009102">
    <property type="term" value="P:biotin biosynthetic process"/>
    <property type="evidence" value="ECO:0007669"/>
    <property type="project" value="UniProtKB-UniRule"/>
</dbReference>
<dbReference type="CDD" id="cd03109">
    <property type="entry name" value="DTBS"/>
    <property type="match status" value="1"/>
</dbReference>
<dbReference type="Gene3D" id="3.40.50.300">
    <property type="entry name" value="P-loop containing nucleotide triphosphate hydrolases"/>
    <property type="match status" value="1"/>
</dbReference>
<dbReference type="HAMAP" id="MF_00336">
    <property type="entry name" value="BioD"/>
    <property type="match status" value="1"/>
</dbReference>
<dbReference type="InterPro" id="IPR004472">
    <property type="entry name" value="DTB_synth_BioD"/>
</dbReference>
<dbReference type="InterPro" id="IPR027417">
    <property type="entry name" value="P-loop_NTPase"/>
</dbReference>
<dbReference type="NCBIfam" id="TIGR00347">
    <property type="entry name" value="bioD"/>
    <property type="match status" value="1"/>
</dbReference>
<dbReference type="PANTHER" id="PTHR43210">
    <property type="entry name" value="DETHIOBIOTIN SYNTHETASE"/>
    <property type="match status" value="1"/>
</dbReference>
<dbReference type="PANTHER" id="PTHR43210:SF5">
    <property type="entry name" value="DETHIOBIOTIN SYNTHETASE"/>
    <property type="match status" value="1"/>
</dbReference>
<dbReference type="Pfam" id="PF13500">
    <property type="entry name" value="AAA_26"/>
    <property type="match status" value="1"/>
</dbReference>
<dbReference type="SUPFAM" id="SSF52540">
    <property type="entry name" value="P-loop containing nucleoside triphosphate hydrolases"/>
    <property type="match status" value="1"/>
</dbReference>
<protein>
    <recommendedName>
        <fullName evidence="1">ATP-dependent dethiobiotin synthetase BioD</fullName>
        <ecNumber evidence="1">6.3.3.3</ecNumber>
    </recommendedName>
    <alternativeName>
        <fullName evidence="1">DTB synthetase</fullName>
        <shortName evidence="1">DTBS</shortName>
    </alternativeName>
    <alternativeName>
        <fullName evidence="1">Dethiobiotin synthase</fullName>
    </alternativeName>
</protein>
<comment type="function">
    <text evidence="1">Catalyzes a mechanistically unusual reaction, the ATP-dependent insertion of CO2 between the N7 and N8 nitrogen atoms of 7,8-diaminopelargonic acid (DAPA, also called 7,8-diammoniononanoate) to form a ureido ring.</text>
</comment>
<comment type="catalytic activity">
    <reaction evidence="1">
        <text>(7R,8S)-7,8-diammoniononanoate + CO2 + ATP = (4R,5S)-dethiobiotin + ADP + phosphate + 3 H(+)</text>
        <dbReference type="Rhea" id="RHEA:15805"/>
        <dbReference type="ChEBI" id="CHEBI:15378"/>
        <dbReference type="ChEBI" id="CHEBI:16526"/>
        <dbReference type="ChEBI" id="CHEBI:30616"/>
        <dbReference type="ChEBI" id="CHEBI:43474"/>
        <dbReference type="ChEBI" id="CHEBI:149469"/>
        <dbReference type="ChEBI" id="CHEBI:149473"/>
        <dbReference type="ChEBI" id="CHEBI:456216"/>
        <dbReference type="EC" id="6.3.3.3"/>
    </reaction>
</comment>
<comment type="cofactor">
    <cofactor evidence="1">
        <name>Mg(2+)</name>
        <dbReference type="ChEBI" id="CHEBI:18420"/>
    </cofactor>
</comment>
<comment type="pathway">
    <text evidence="1">Cofactor biosynthesis; biotin biosynthesis; biotin from 7,8-diaminononanoate: step 1/2.</text>
</comment>
<comment type="subunit">
    <text evidence="1">Homodimer.</text>
</comment>
<comment type="subcellular location">
    <subcellularLocation>
        <location evidence="1">Cytoplasm</location>
    </subcellularLocation>
</comment>
<comment type="similarity">
    <text evidence="1">Belongs to the dethiobiotin synthetase family.</text>
</comment>
<feature type="chain" id="PRO_1000079271" description="ATP-dependent dethiobiotin synthetase BioD">
    <location>
        <begin position="1"/>
        <end position="230"/>
    </location>
</feature>
<feature type="active site" evidence="1">
    <location>
        <position position="37"/>
    </location>
</feature>
<feature type="binding site" evidence="1">
    <location>
        <begin position="12"/>
        <end position="17"/>
    </location>
    <ligand>
        <name>ATP</name>
        <dbReference type="ChEBI" id="CHEBI:30616"/>
    </ligand>
</feature>
<feature type="binding site" evidence="1">
    <location>
        <position position="16"/>
    </location>
    <ligand>
        <name>Mg(2+)</name>
        <dbReference type="ChEBI" id="CHEBI:18420"/>
    </ligand>
</feature>
<feature type="binding site" evidence="1">
    <location>
        <position position="41"/>
    </location>
    <ligand>
        <name>substrate</name>
    </ligand>
</feature>
<feature type="binding site" evidence="1">
    <location>
        <position position="52"/>
    </location>
    <ligand>
        <name>ATP</name>
        <dbReference type="ChEBI" id="CHEBI:30616"/>
    </ligand>
</feature>
<feature type="binding site" evidence="1">
    <location>
        <position position="52"/>
    </location>
    <ligand>
        <name>Mg(2+)</name>
        <dbReference type="ChEBI" id="CHEBI:18420"/>
    </ligand>
</feature>
<feature type="binding site" evidence="1">
    <location>
        <begin position="115"/>
        <end position="118"/>
    </location>
    <ligand>
        <name>ATP</name>
        <dbReference type="ChEBI" id="CHEBI:30616"/>
    </ligand>
</feature>
<feature type="binding site" evidence="1">
    <location>
        <position position="115"/>
    </location>
    <ligand>
        <name>Mg(2+)</name>
        <dbReference type="ChEBI" id="CHEBI:18420"/>
    </ligand>
</feature>
<feature type="binding site" evidence="1">
    <location>
        <begin position="175"/>
        <end position="176"/>
    </location>
    <ligand>
        <name>ATP</name>
        <dbReference type="ChEBI" id="CHEBI:30616"/>
    </ligand>
</feature>
<name>BIOD_CAUSK</name>
<gene>
    <name evidence="1" type="primary">bioD</name>
    <name type="ordered locus">Caul_2876</name>
</gene>
<evidence type="ECO:0000255" key="1">
    <source>
        <dbReference type="HAMAP-Rule" id="MF_00336"/>
    </source>
</evidence>
<keyword id="KW-0067">ATP-binding</keyword>
<keyword id="KW-0093">Biotin biosynthesis</keyword>
<keyword id="KW-0963">Cytoplasm</keyword>
<keyword id="KW-0436">Ligase</keyword>
<keyword id="KW-0460">Magnesium</keyword>
<keyword id="KW-0479">Metal-binding</keyword>
<keyword id="KW-0547">Nucleotide-binding</keyword>
<proteinExistence type="inferred from homology"/>